<comment type="similarity">
    <text evidence="2">Belongs to the MacroD-type family.</text>
</comment>
<name>Y7730_RHILO</name>
<gene>
    <name type="ordered locus">mll7730</name>
</gene>
<feature type="chain" id="PRO_0000089205" description="Macro domain-containing protein mll7730">
    <location>
        <begin position="1"/>
        <end position="176"/>
    </location>
</feature>
<feature type="domain" description="Macro" evidence="1">
    <location>
        <begin position="1"/>
        <end position="174"/>
    </location>
</feature>
<reference key="1">
    <citation type="journal article" date="2000" name="DNA Res.">
        <title>Complete genome structure of the nitrogen-fixing symbiotic bacterium Mesorhizobium loti.</title>
        <authorList>
            <person name="Kaneko T."/>
            <person name="Nakamura Y."/>
            <person name="Sato S."/>
            <person name="Asamizu E."/>
            <person name="Kato T."/>
            <person name="Sasamoto S."/>
            <person name="Watanabe A."/>
            <person name="Idesawa K."/>
            <person name="Ishikawa A."/>
            <person name="Kawashima K."/>
            <person name="Kimura T."/>
            <person name="Kishida Y."/>
            <person name="Kiyokawa C."/>
            <person name="Kohara M."/>
            <person name="Matsumoto M."/>
            <person name="Matsuno A."/>
            <person name="Mochizuki Y."/>
            <person name="Nakayama S."/>
            <person name="Nakazaki N."/>
            <person name="Shimpo S."/>
            <person name="Sugimoto M."/>
            <person name="Takeuchi C."/>
            <person name="Yamada M."/>
            <person name="Tabata S."/>
        </authorList>
    </citation>
    <scope>NUCLEOTIDE SEQUENCE [LARGE SCALE GENOMIC DNA]</scope>
    <source>
        <strain>LMG 29417 / CECT 9101 / MAFF 303099</strain>
    </source>
</reference>
<evidence type="ECO:0000255" key="1">
    <source>
        <dbReference type="PROSITE-ProRule" id="PRU00490"/>
    </source>
</evidence>
<evidence type="ECO:0000305" key="2"/>
<protein>
    <recommendedName>
        <fullName>Macro domain-containing protein mll7730</fullName>
    </recommendedName>
</protein>
<accession>Q985D2</accession>
<organism>
    <name type="scientific">Mesorhizobium japonicum (strain LMG 29417 / CECT 9101 / MAFF 303099)</name>
    <name type="common">Mesorhizobium loti (strain MAFF 303099)</name>
    <dbReference type="NCBI Taxonomy" id="266835"/>
    <lineage>
        <taxon>Bacteria</taxon>
        <taxon>Pseudomonadati</taxon>
        <taxon>Pseudomonadota</taxon>
        <taxon>Alphaproteobacteria</taxon>
        <taxon>Hyphomicrobiales</taxon>
        <taxon>Phyllobacteriaceae</taxon>
        <taxon>Mesorhizobium</taxon>
    </lineage>
</organism>
<sequence length="176" mass="18719">MSKALDRIRIHTGDITKLDVDAIVNAANTLLLGGGGVDGAIHRAAGRELEVECRMLNGCKVGDAKITKGYKLPARHIIHTVGPVWQGGGKGEAELLASCYRSSLELAAANDCRSVAFPAISTGVYRYPKDEATGIAVGTVSMVIEEKAMPETVIFCCFDEQTAQLYLRAVAALRKG</sequence>
<dbReference type="EMBL" id="BA000012">
    <property type="protein sequence ID" value="BAB54130.1"/>
    <property type="molecule type" value="Genomic_DNA"/>
</dbReference>
<dbReference type="RefSeq" id="WP_010915078.1">
    <property type="nucleotide sequence ID" value="NC_002678.2"/>
</dbReference>
<dbReference type="SMR" id="Q985D2"/>
<dbReference type="KEGG" id="mlo:mll7730"/>
<dbReference type="PATRIC" id="fig|266835.9.peg.6187"/>
<dbReference type="eggNOG" id="COG2110">
    <property type="taxonomic scope" value="Bacteria"/>
</dbReference>
<dbReference type="HOGENOM" id="CLU_046550_5_1_5"/>
<dbReference type="Proteomes" id="UP000000552">
    <property type="component" value="Chromosome"/>
</dbReference>
<dbReference type="GO" id="GO:0061463">
    <property type="term" value="F:O-acetyl-ADP-ribose deacetylase activity"/>
    <property type="evidence" value="ECO:0007669"/>
    <property type="project" value="TreeGrafter"/>
</dbReference>
<dbReference type="CDD" id="cd02908">
    <property type="entry name" value="Macro_OAADPr_deacetylase"/>
    <property type="match status" value="1"/>
</dbReference>
<dbReference type="Gene3D" id="3.40.220.10">
    <property type="entry name" value="Leucine Aminopeptidase, subunit E, domain 1"/>
    <property type="match status" value="1"/>
</dbReference>
<dbReference type="InterPro" id="IPR002589">
    <property type="entry name" value="Macro_dom"/>
</dbReference>
<dbReference type="InterPro" id="IPR043472">
    <property type="entry name" value="Macro_dom-like"/>
</dbReference>
<dbReference type="NCBIfam" id="NF001664">
    <property type="entry name" value="PRK00431.1-6"/>
    <property type="match status" value="1"/>
</dbReference>
<dbReference type="PANTHER" id="PTHR11106">
    <property type="entry name" value="GANGLIOSIDE INDUCED DIFFERENTIATION ASSOCIATED PROTEIN 2-RELATED"/>
    <property type="match status" value="1"/>
</dbReference>
<dbReference type="PANTHER" id="PTHR11106:SF27">
    <property type="entry name" value="MACRO DOMAIN-CONTAINING PROTEIN"/>
    <property type="match status" value="1"/>
</dbReference>
<dbReference type="Pfam" id="PF01661">
    <property type="entry name" value="Macro"/>
    <property type="match status" value="1"/>
</dbReference>
<dbReference type="SMART" id="SM00506">
    <property type="entry name" value="A1pp"/>
    <property type="match status" value="1"/>
</dbReference>
<dbReference type="SUPFAM" id="SSF52949">
    <property type="entry name" value="Macro domain-like"/>
    <property type="match status" value="1"/>
</dbReference>
<dbReference type="PROSITE" id="PS51154">
    <property type="entry name" value="MACRO"/>
    <property type="match status" value="1"/>
</dbReference>
<proteinExistence type="inferred from homology"/>